<gene>
    <name type="primary">SKIP14</name>
    <name type="ordered locus">At3g26000</name>
    <name type="ORF">MPE11.17</name>
</gene>
<keyword id="KW-1185">Reference proteome</keyword>
<keyword id="KW-0833">Ubl conjugation pathway</keyword>
<dbReference type="EMBL" id="AB023041">
    <property type="protein sequence ID" value="BAB01063.1"/>
    <property type="molecule type" value="Genomic_DNA"/>
</dbReference>
<dbReference type="EMBL" id="CP002686">
    <property type="protein sequence ID" value="AEE77100.1"/>
    <property type="molecule type" value="Genomic_DNA"/>
</dbReference>
<dbReference type="EMBL" id="AY058077">
    <property type="protein sequence ID" value="AAL24185.1"/>
    <property type="molecule type" value="mRNA"/>
</dbReference>
<dbReference type="EMBL" id="AY140009">
    <property type="protein sequence ID" value="AAM98151.1"/>
    <property type="molecule type" value="mRNA"/>
</dbReference>
<dbReference type="EMBL" id="BT015945">
    <property type="protein sequence ID" value="AAV34775.1"/>
    <property type="molecule type" value="mRNA"/>
</dbReference>
<dbReference type="RefSeq" id="NP_566787.1">
    <property type="nucleotide sequence ID" value="NM_113504.3"/>
</dbReference>
<dbReference type="SMR" id="Q9LU91"/>
<dbReference type="BioGRID" id="7528">
    <property type="interactions" value="7"/>
</dbReference>
<dbReference type="FunCoup" id="Q9LU91">
    <property type="interactions" value="911"/>
</dbReference>
<dbReference type="IntAct" id="Q9LU91">
    <property type="interactions" value="8"/>
</dbReference>
<dbReference type="STRING" id="3702.Q9LU91"/>
<dbReference type="PaxDb" id="3702-AT3G26000.1"/>
<dbReference type="ProteomicsDB" id="234539"/>
<dbReference type="EnsemblPlants" id="AT3G26000.1">
    <property type="protein sequence ID" value="AT3G26000.1"/>
    <property type="gene ID" value="AT3G26000"/>
</dbReference>
<dbReference type="GeneID" id="822197"/>
<dbReference type="Gramene" id="AT3G26000.1">
    <property type="protein sequence ID" value="AT3G26000.1"/>
    <property type="gene ID" value="AT3G26000"/>
</dbReference>
<dbReference type="KEGG" id="ath:AT3G26000"/>
<dbReference type="Araport" id="AT3G26000"/>
<dbReference type="TAIR" id="AT3G26000">
    <property type="gene designation" value="RIFP1"/>
</dbReference>
<dbReference type="eggNOG" id="ENOG502QRGM">
    <property type="taxonomic scope" value="Eukaryota"/>
</dbReference>
<dbReference type="HOGENOM" id="CLU_034156_1_0_1"/>
<dbReference type="InParanoid" id="Q9LU91"/>
<dbReference type="OMA" id="MMRGCGC"/>
<dbReference type="PhylomeDB" id="Q9LU91"/>
<dbReference type="UniPathway" id="UPA00143"/>
<dbReference type="PRO" id="PR:Q9LU91"/>
<dbReference type="Proteomes" id="UP000006548">
    <property type="component" value="Chromosome 3"/>
</dbReference>
<dbReference type="ExpressionAtlas" id="Q9LU91">
    <property type="expression patterns" value="baseline and differential"/>
</dbReference>
<dbReference type="GO" id="GO:0005829">
    <property type="term" value="C:cytosol"/>
    <property type="evidence" value="ECO:0000314"/>
    <property type="project" value="TAIR"/>
</dbReference>
<dbReference type="GO" id="GO:0005634">
    <property type="term" value="C:nucleus"/>
    <property type="evidence" value="ECO:0000314"/>
    <property type="project" value="TAIR"/>
</dbReference>
<dbReference type="GO" id="GO:0009788">
    <property type="term" value="P:negative regulation of abscisic acid-activated signaling pathway"/>
    <property type="evidence" value="ECO:0000315"/>
    <property type="project" value="TAIR"/>
</dbReference>
<dbReference type="GO" id="GO:0016567">
    <property type="term" value="P:protein ubiquitination"/>
    <property type="evidence" value="ECO:0007669"/>
    <property type="project" value="UniProtKB-UniPathway"/>
</dbReference>
<dbReference type="Gene3D" id="3.80.10.10">
    <property type="entry name" value="Ribonuclease Inhibitor"/>
    <property type="match status" value="1"/>
</dbReference>
<dbReference type="InterPro" id="IPR036047">
    <property type="entry name" value="F-box-like_dom_sf"/>
</dbReference>
<dbReference type="InterPro" id="IPR001810">
    <property type="entry name" value="F-box_dom"/>
</dbReference>
<dbReference type="InterPro" id="IPR050648">
    <property type="entry name" value="F-box_LRR-repeat"/>
</dbReference>
<dbReference type="InterPro" id="IPR032675">
    <property type="entry name" value="LRR_dom_sf"/>
</dbReference>
<dbReference type="PANTHER" id="PTHR13382:SF22">
    <property type="entry name" value="F-BOX PROTEIN SKIP14"/>
    <property type="match status" value="1"/>
</dbReference>
<dbReference type="PANTHER" id="PTHR13382">
    <property type="entry name" value="MITOCHONDRIAL ATP SYNTHASE COUPLING FACTOR B"/>
    <property type="match status" value="1"/>
</dbReference>
<dbReference type="Pfam" id="PF12937">
    <property type="entry name" value="F-box-like"/>
    <property type="match status" value="1"/>
</dbReference>
<dbReference type="SUPFAM" id="SSF81383">
    <property type="entry name" value="F-box domain"/>
    <property type="match status" value="1"/>
</dbReference>
<comment type="function">
    <text evidence="1">Component of SCF(ASK-cullin-F-box) E3 ubiquitin ligase complexes, which may mediate the ubiquitination and subsequent proteasomal degradation of target proteins.</text>
</comment>
<comment type="pathway">
    <text>Protein modification; protein ubiquitination.</text>
</comment>
<comment type="subunit">
    <text evidence="1 2">Part of a SCF (ASK-cullin-F-box) protein ligase complex (By similarity). Interacts with CUL1, SKP1A/ASK1 and SPK1B/ASK2.</text>
</comment>
<comment type="domain">
    <text evidence="1">The F-box is necessary for the interaction with ASK proteins.</text>
</comment>
<reference key="1">
    <citation type="journal article" date="2000" name="DNA Res.">
        <title>Structural analysis of Arabidopsis thaliana chromosome 3. I. Sequence features of the regions of 4,504,864 bp covered by sixty P1 and TAC clones.</title>
        <authorList>
            <person name="Sato S."/>
            <person name="Nakamura Y."/>
            <person name="Kaneko T."/>
            <person name="Katoh T."/>
            <person name="Asamizu E."/>
            <person name="Tabata S."/>
        </authorList>
    </citation>
    <scope>NUCLEOTIDE SEQUENCE [LARGE SCALE GENOMIC DNA]</scope>
    <source>
        <strain>cv. Columbia</strain>
    </source>
</reference>
<reference key="2">
    <citation type="journal article" date="2017" name="Plant J.">
        <title>Araport11: a complete reannotation of the Arabidopsis thaliana reference genome.</title>
        <authorList>
            <person name="Cheng C.Y."/>
            <person name="Krishnakumar V."/>
            <person name="Chan A.P."/>
            <person name="Thibaud-Nissen F."/>
            <person name="Schobel S."/>
            <person name="Town C.D."/>
        </authorList>
    </citation>
    <scope>GENOME REANNOTATION</scope>
    <source>
        <strain>cv. Columbia</strain>
    </source>
</reference>
<reference key="3">
    <citation type="journal article" date="2003" name="Science">
        <title>Empirical analysis of transcriptional activity in the Arabidopsis genome.</title>
        <authorList>
            <person name="Yamada K."/>
            <person name="Lim J."/>
            <person name="Dale J.M."/>
            <person name="Chen H."/>
            <person name="Shinn P."/>
            <person name="Palm C.J."/>
            <person name="Southwick A.M."/>
            <person name="Wu H.C."/>
            <person name="Kim C.J."/>
            <person name="Nguyen M."/>
            <person name="Pham P.K."/>
            <person name="Cheuk R.F."/>
            <person name="Karlin-Newmann G."/>
            <person name="Liu S.X."/>
            <person name="Lam B."/>
            <person name="Sakano H."/>
            <person name="Wu T."/>
            <person name="Yu G."/>
            <person name="Miranda M."/>
            <person name="Quach H.L."/>
            <person name="Tripp M."/>
            <person name="Chang C.H."/>
            <person name="Lee J.M."/>
            <person name="Toriumi M.J."/>
            <person name="Chan M.M."/>
            <person name="Tang C.C."/>
            <person name="Onodera C.S."/>
            <person name="Deng J.M."/>
            <person name="Akiyama K."/>
            <person name="Ansari Y."/>
            <person name="Arakawa T."/>
            <person name="Banh J."/>
            <person name="Banno F."/>
            <person name="Bowser L."/>
            <person name="Brooks S.Y."/>
            <person name="Carninci P."/>
            <person name="Chao Q."/>
            <person name="Choy N."/>
            <person name="Enju A."/>
            <person name="Goldsmith A.D."/>
            <person name="Gurjal M."/>
            <person name="Hansen N.F."/>
            <person name="Hayashizaki Y."/>
            <person name="Johnson-Hopson C."/>
            <person name="Hsuan V.W."/>
            <person name="Iida K."/>
            <person name="Karnes M."/>
            <person name="Khan S."/>
            <person name="Koesema E."/>
            <person name="Ishida J."/>
            <person name="Jiang P.X."/>
            <person name="Jones T."/>
            <person name="Kawai J."/>
            <person name="Kamiya A."/>
            <person name="Meyers C."/>
            <person name="Nakajima M."/>
            <person name="Narusaka M."/>
            <person name="Seki M."/>
            <person name="Sakurai T."/>
            <person name="Satou M."/>
            <person name="Tamse R."/>
            <person name="Vaysberg M."/>
            <person name="Wallender E.K."/>
            <person name="Wong C."/>
            <person name="Yamamura Y."/>
            <person name="Yuan S."/>
            <person name="Shinozaki K."/>
            <person name="Davis R.W."/>
            <person name="Theologis A."/>
            <person name="Ecker J.R."/>
        </authorList>
    </citation>
    <scope>NUCLEOTIDE SEQUENCE [LARGE SCALE MRNA]</scope>
    <source>
        <strain>cv. Columbia</strain>
    </source>
</reference>
<reference key="4">
    <citation type="submission" date="2004-10" db="EMBL/GenBank/DDBJ databases">
        <title>Arabidopsis ORF clones.</title>
        <authorList>
            <person name="Shinn P."/>
            <person name="Chen H."/>
            <person name="Cheuk R.F."/>
            <person name="Kim C.J."/>
            <person name="Ecker J.R."/>
        </authorList>
    </citation>
    <scope>NUCLEOTIDE SEQUENCE [LARGE SCALE MRNA]</scope>
    <source>
        <strain>cv. Columbia</strain>
    </source>
</reference>
<reference key="5">
    <citation type="journal article" date="2003" name="Plant J.">
        <title>Protein interaction analysis of SCF ubiquitin E3 ligase subunits from Arabidopsis.</title>
        <authorList>
            <person name="Risseeuw E.P."/>
            <person name="Daskalchuk T.E."/>
            <person name="Banks T.W."/>
            <person name="Liu E."/>
            <person name="Cotelesage J."/>
            <person name="Hellmann H."/>
            <person name="Estelle M."/>
            <person name="Somers D.E."/>
            <person name="Crosby W.L."/>
        </authorList>
    </citation>
    <scope>INTERACTION WITH CUL1; SKP1A/ASK1 AND SPK1B/ASK2</scope>
</reference>
<organism>
    <name type="scientific">Arabidopsis thaliana</name>
    <name type="common">Mouse-ear cress</name>
    <dbReference type="NCBI Taxonomy" id="3702"/>
    <lineage>
        <taxon>Eukaryota</taxon>
        <taxon>Viridiplantae</taxon>
        <taxon>Streptophyta</taxon>
        <taxon>Embryophyta</taxon>
        <taxon>Tracheophyta</taxon>
        <taxon>Spermatophyta</taxon>
        <taxon>Magnoliopsida</taxon>
        <taxon>eudicotyledons</taxon>
        <taxon>Gunneridae</taxon>
        <taxon>Pentapetalae</taxon>
        <taxon>rosids</taxon>
        <taxon>malvids</taxon>
        <taxon>Brassicales</taxon>
        <taxon>Brassicaceae</taxon>
        <taxon>Camelineae</taxon>
        <taxon>Arabidopsis</taxon>
    </lineage>
</organism>
<protein>
    <recommendedName>
        <fullName>F-box protein SKIP14</fullName>
    </recommendedName>
    <alternativeName>
        <fullName>SKP1-interacting partner 14</fullName>
    </alternativeName>
</protein>
<evidence type="ECO:0000250" key="1"/>
<evidence type="ECO:0000269" key="2">
    <source>
    </source>
</evidence>
<evidence type="ECO:0000305" key="3"/>
<feature type="chain" id="PRO_0000375237" description="F-box protein SKIP14">
    <location>
        <begin position="1"/>
        <end position="453"/>
    </location>
</feature>
<feature type="domain" description="F-box; degenerate">
    <location>
        <begin position="34"/>
        <end position="104"/>
    </location>
</feature>
<feature type="sequence conflict" description="In Ref. 3; AAM98151." evidence="3" ref="3">
    <original>K</original>
    <variation>E</variation>
    <location>
        <position position="402"/>
    </location>
</feature>
<sequence>MALNFSHRPFSSHLSEEPMMIANGNWCSSFDNGRKNTGGDASSVDILDVLPSDPFGMDINNTFTAITGWLEDLEDDYNNQYGRRRRDDIWIGDGNRQQLFAGLSFFWNNAMQFQSSGYSYGSESLFGGAFDGSLFSTCKFPESSGENNGFGGALDGDGSCHGAFISASSVDEVLSHENARNGEVVGSSDRCNNGEEDAYVHPAIGFCLYHLRGKDLLSVSMVCKSLHTTVCDDTLLWKHIHICRPLNEKITEEALLHLTERAQGTMQCLRIVDCCRITDDCLKRVVARNRQVVKIGVPGCTRITIDGILSVLRDLKSAGKLQVKHLQLRGLFGVTKDHYDELIDLLNIDNKVKQTIQKPRFYHRGEACVSCDDDRALDIEMCPKCQNFKLVYDCPAEDCKGKKKGSEECRACSLCIQRCYHCGRCIIDTEYEEMFCLELLCAVCSKPTPKLTL</sequence>
<proteinExistence type="evidence at protein level"/>
<accession>Q9LU91</accession>
<accession>Q8L720</accession>
<name>SKI14_ARATH</name>